<comment type="function">
    <text evidence="1">Key component of the proton channel; it plays a direct role in the translocation of protons across the membrane.</text>
</comment>
<comment type="subunit">
    <text evidence="1">F-type ATPases have 2 components, CF(1) - the catalytic core - and CF(0) - the membrane proton channel. CF(1) has five subunits: alpha(3), beta(3), gamma(1), delta(1), epsilon(1). CF(0) has three main subunits: a(1), b(2) and c(9-12). The alpha and beta chains form an alternating ring which encloses part of the gamma chain. CF(1) is attached to CF(0) by a central stalk formed by the gamma and epsilon chains, while a peripheral stalk is formed by the delta and b chains.</text>
</comment>
<comment type="subcellular location">
    <subcellularLocation>
        <location evidence="1">Cell membrane</location>
        <topology evidence="1">Multi-pass membrane protein</topology>
    </subcellularLocation>
</comment>
<comment type="similarity">
    <text evidence="1">Belongs to the ATPase A chain family.</text>
</comment>
<proteinExistence type="inferred from homology"/>
<organism>
    <name type="scientific">Staphylococcus aureus (strain bovine RF122 / ET3-1)</name>
    <dbReference type="NCBI Taxonomy" id="273036"/>
    <lineage>
        <taxon>Bacteria</taxon>
        <taxon>Bacillati</taxon>
        <taxon>Bacillota</taxon>
        <taxon>Bacilli</taxon>
        <taxon>Bacillales</taxon>
        <taxon>Staphylococcaceae</taxon>
        <taxon>Staphylococcus</taxon>
    </lineage>
</organism>
<dbReference type="EMBL" id="AJ938182">
    <property type="protein sequence ID" value="CAI81682.1"/>
    <property type="molecule type" value="Genomic_DNA"/>
</dbReference>
<dbReference type="RefSeq" id="WP_000349655.1">
    <property type="nucleotide sequence ID" value="NC_007622.1"/>
</dbReference>
<dbReference type="SMR" id="Q2YUJ5"/>
<dbReference type="KEGG" id="sab:SAB1993c"/>
<dbReference type="HOGENOM" id="CLU_041018_2_3_9"/>
<dbReference type="GO" id="GO:0005886">
    <property type="term" value="C:plasma membrane"/>
    <property type="evidence" value="ECO:0007669"/>
    <property type="project" value="UniProtKB-SubCell"/>
</dbReference>
<dbReference type="GO" id="GO:0045259">
    <property type="term" value="C:proton-transporting ATP synthase complex"/>
    <property type="evidence" value="ECO:0007669"/>
    <property type="project" value="UniProtKB-KW"/>
</dbReference>
<dbReference type="GO" id="GO:0046933">
    <property type="term" value="F:proton-transporting ATP synthase activity, rotational mechanism"/>
    <property type="evidence" value="ECO:0007669"/>
    <property type="project" value="UniProtKB-UniRule"/>
</dbReference>
<dbReference type="GO" id="GO:0042777">
    <property type="term" value="P:proton motive force-driven plasma membrane ATP synthesis"/>
    <property type="evidence" value="ECO:0007669"/>
    <property type="project" value="TreeGrafter"/>
</dbReference>
<dbReference type="CDD" id="cd00310">
    <property type="entry name" value="ATP-synt_Fo_a_6"/>
    <property type="match status" value="1"/>
</dbReference>
<dbReference type="FunFam" id="1.20.120.220:FF:000005">
    <property type="entry name" value="ATP synthase subunit a"/>
    <property type="match status" value="1"/>
</dbReference>
<dbReference type="Gene3D" id="1.20.120.220">
    <property type="entry name" value="ATP synthase, F0 complex, subunit A"/>
    <property type="match status" value="1"/>
</dbReference>
<dbReference type="HAMAP" id="MF_01393">
    <property type="entry name" value="ATP_synth_a_bact"/>
    <property type="match status" value="1"/>
</dbReference>
<dbReference type="InterPro" id="IPR045082">
    <property type="entry name" value="ATP_syn_F0_a_bact/chloroplast"/>
</dbReference>
<dbReference type="InterPro" id="IPR000568">
    <property type="entry name" value="ATP_synth_F0_asu"/>
</dbReference>
<dbReference type="InterPro" id="IPR023011">
    <property type="entry name" value="ATP_synth_F0_asu_AS"/>
</dbReference>
<dbReference type="InterPro" id="IPR035908">
    <property type="entry name" value="F0_ATP_A_sf"/>
</dbReference>
<dbReference type="NCBIfam" id="TIGR01131">
    <property type="entry name" value="ATP_synt_6_or_A"/>
    <property type="match status" value="1"/>
</dbReference>
<dbReference type="NCBIfam" id="NF004479">
    <property type="entry name" value="PRK05815.1-4"/>
    <property type="match status" value="1"/>
</dbReference>
<dbReference type="PANTHER" id="PTHR42823">
    <property type="entry name" value="ATP SYNTHASE SUBUNIT A, CHLOROPLASTIC"/>
    <property type="match status" value="1"/>
</dbReference>
<dbReference type="PANTHER" id="PTHR42823:SF3">
    <property type="entry name" value="ATP SYNTHASE SUBUNIT A, CHLOROPLASTIC"/>
    <property type="match status" value="1"/>
</dbReference>
<dbReference type="Pfam" id="PF00119">
    <property type="entry name" value="ATP-synt_A"/>
    <property type="match status" value="1"/>
</dbReference>
<dbReference type="PRINTS" id="PR00123">
    <property type="entry name" value="ATPASEA"/>
</dbReference>
<dbReference type="SUPFAM" id="SSF81336">
    <property type="entry name" value="F1F0 ATP synthase subunit A"/>
    <property type="match status" value="1"/>
</dbReference>
<dbReference type="PROSITE" id="PS00449">
    <property type="entry name" value="ATPASE_A"/>
    <property type="match status" value="1"/>
</dbReference>
<feature type="chain" id="PRO_1000145309" description="ATP synthase subunit a">
    <location>
        <begin position="1"/>
        <end position="242"/>
    </location>
</feature>
<feature type="transmembrane region" description="Helical" evidence="1">
    <location>
        <begin position="21"/>
        <end position="41"/>
    </location>
</feature>
<feature type="transmembrane region" description="Helical" evidence="1">
    <location>
        <begin position="83"/>
        <end position="103"/>
    </location>
</feature>
<feature type="transmembrane region" description="Helical" evidence="1">
    <location>
        <begin position="117"/>
        <end position="137"/>
    </location>
</feature>
<feature type="transmembrane region" description="Helical" evidence="1">
    <location>
        <begin position="175"/>
        <end position="195"/>
    </location>
</feature>
<feature type="transmembrane region" description="Helical" evidence="1">
    <location>
        <begin position="198"/>
        <end position="218"/>
    </location>
</feature>
<sequence>MDHKSPLVSWNLFGFDIVFNLSSILMILVTAFLVFLLAIICTRNLKKRPTGKQNFVEWIFDFVRGIIEGNMAWKKGGQFHFLAVTLILYIFIANMLGLPFSIVTKDHTLWWKSPTADATVTLTLSTTIILLTHFYGIKMRGTKQYLKGYVQPFWPLAIINVFEEFTSTLTLGLRLYGNIFAGEILLTLLAGLFFNEPAWGWIISIPGLIVWQAFSIFVGTIQAYIFIMLSMVYMSHKVADEH</sequence>
<evidence type="ECO:0000255" key="1">
    <source>
        <dbReference type="HAMAP-Rule" id="MF_01393"/>
    </source>
</evidence>
<keyword id="KW-0066">ATP synthesis</keyword>
<keyword id="KW-1003">Cell membrane</keyword>
<keyword id="KW-0138">CF(0)</keyword>
<keyword id="KW-0375">Hydrogen ion transport</keyword>
<keyword id="KW-0406">Ion transport</keyword>
<keyword id="KW-0472">Membrane</keyword>
<keyword id="KW-0812">Transmembrane</keyword>
<keyword id="KW-1133">Transmembrane helix</keyword>
<keyword id="KW-0813">Transport</keyword>
<name>ATP6_STAAB</name>
<gene>
    <name evidence="1" type="primary">atpB</name>
    <name type="ordered locus">SAB1993c</name>
</gene>
<reference key="1">
    <citation type="journal article" date="2007" name="PLoS ONE">
        <title>Molecular correlates of host specialization in Staphylococcus aureus.</title>
        <authorList>
            <person name="Herron-Olson L."/>
            <person name="Fitzgerald J.R."/>
            <person name="Musser J.M."/>
            <person name="Kapur V."/>
        </authorList>
    </citation>
    <scope>NUCLEOTIDE SEQUENCE [LARGE SCALE GENOMIC DNA]</scope>
    <source>
        <strain>bovine RF122 / ET3-1</strain>
    </source>
</reference>
<protein>
    <recommendedName>
        <fullName evidence="1">ATP synthase subunit a</fullName>
    </recommendedName>
    <alternativeName>
        <fullName evidence="1">ATP synthase F0 sector subunit a</fullName>
    </alternativeName>
    <alternativeName>
        <fullName evidence="1">F-ATPase subunit 6</fullName>
    </alternativeName>
</protein>
<accession>Q2YUJ5</accession>